<keyword id="KW-1015">Disulfide bond</keyword>
<keyword id="KW-0372">Hormone</keyword>
<keyword id="KW-1185">Reference proteome</keyword>
<keyword id="KW-0964">Secreted</keyword>
<keyword id="KW-0732">Signal</keyword>
<comment type="function">
    <text evidence="1">Cell signaling peptide that may regulate plant stress, growth, and development. Mediates a rapid alkalinization of extracellular space by mediating a transient increase in the cytoplasmic Ca(2+) concentration leading to a calcium-dependent signaling events through a cell surface receptor and a concomitant activation of some intracellular mitogen-activated protein kinases (By similarity).</text>
</comment>
<comment type="subcellular location">
    <subcellularLocation>
        <location evidence="1">Secreted</location>
    </subcellularLocation>
</comment>
<comment type="similarity">
    <text evidence="3">Belongs to the plant rapid alkalinization factor (RALF) family.</text>
</comment>
<accession>A8MQ92</accession>
<evidence type="ECO:0000250" key="1"/>
<evidence type="ECO:0000255" key="2"/>
<evidence type="ECO:0000305" key="3"/>
<sequence>MEARHMLVTILLLSFVFMNIMKVEAQKVIGYPAIGRDGARGCSPKDPSCPQQPEKPYKRGCEKITRCERDRRKQAHLRNPRKVLDVVAVMAKAKQLY</sequence>
<reference key="1">
    <citation type="journal article" date="2000" name="Nature">
        <title>Sequence and analysis of chromosome 1 of the plant Arabidopsis thaliana.</title>
        <authorList>
            <person name="Theologis A."/>
            <person name="Ecker J.R."/>
            <person name="Palm C.J."/>
            <person name="Federspiel N.A."/>
            <person name="Kaul S."/>
            <person name="White O."/>
            <person name="Alonso J."/>
            <person name="Altafi H."/>
            <person name="Araujo R."/>
            <person name="Bowman C.L."/>
            <person name="Brooks S.Y."/>
            <person name="Buehler E."/>
            <person name="Chan A."/>
            <person name="Chao Q."/>
            <person name="Chen H."/>
            <person name="Cheuk R.F."/>
            <person name="Chin C.W."/>
            <person name="Chung M.K."/>
            <person name="Conn L."/>
            <person name="Conway A.B."/>
            <person name="Conway A.R."/>
            <person name="Creasy T.H."/>
            <person name="Dewar K."/>
            <person name="Dunn P."/>
            <person name="Etgu P."/>
            <person name="Feldblyum T.V."/>
            <person name="Feng J.-D."/>
            <person name="Fong B."/>
            <person name="Fujii C.Y."/>
            <person name="Gill J.E."/>
            <person name="Goldsmith A.D."/>
            <person name="Haas B."/>
            <person name="Hansen N.F."/>
            <person name="Hughes B."/>
            <person name="Huizar L."/>
            <person name="Hunter J.L."/>
            <person name="Jenkins J."/>
            <person name="Johnson-Hopson C."/>
            <person name="Khan S."/>
            <person name="Khaykin E."/>
            <person name="Kim C.J."/>
            <person name="Koo H.L."/>
            <person name="Kremenetskaia I."/>
            <person name="Kurtz D.B."/>
            <person name="Kwan A."/>
            <person name="Lam B."/>
            <person name="Langin-Hooper S."/>
            <person name="Lee A."/>
            <person name="Lee J.M."/>
            <person name="Lenz C.A."/>
            <person name="Li J.H."/>
            <person name="Li Y.-P."/>
            <person name="Lin X."/>
            <person name="Liu S.X."/>
            <person name="Liu Z.A."/>
            <person name="Luros J.S."/>
            <person name="Maiti R."/>
            <person name="Marziali A."/>
            <person name="Militscher J."/>
            <person name="Miranda M."/>
            <person name="Nguyen M."/>
            <person name="Nierman W.C."/>
            <person name="Osborne B.I."/>
            <person name="Pai G."/>
            <person name="Peterson J."/>
            <person name="Pham P.K."/>
            <person name="Rizzo M."/>
            <person name="Rooney T."/>
            <person name="Rowley D."/>
            <person name="Sakano H."/>
            <person name="Salzberg S.L."/>
            <person name="Schwartz J.R."/>
            <person name="Shinn P."/>
            <person name="Southwick A.M."/>
            <person name="Sun H."/>
            <person name="Tallon L.J."/>
            <person name="Tambunga G."/>
            <person name="Toriumi M.J."/>
            <person name="Town C.D."/>
            <person name="Utterback T."/>
            <person name="Van Aken S."/>
            <person name="Vaysberg M."/>
            <person name="Vysotskaia V.S."/>
            <person name="Walker M."/>
            <person name="Wu D."/>
            <person name="Yu G."/>
            <person name="Fraser C.M."/>
            <person name="Venter J.C."/>
            <person name="Davis R.W."/>
        </authorList>
    </citation>
    <scope>NUCLEOTIDE SEQUENCE [LARGE SCALE GENOMIC DNA]</scope>
    <source>
        <strain>cv. Columbia</strain>
    </source>
</reference>
<reference key="2">
    <citation type="journal article" date="2017" name="Plant J.">
        <title>Araport11: a complete reannotation of the Arabidopsis thaliana reference genome.</title>
        <authorList>
            <person name="Cheng C.Y."/>
            <person name="Krishnakumar V."/>
            <person name="Chan A.P."/>
            <person name="Thibaud-Nissen F."/>
            <person name="Schobel S."/>
            <person name="Town C.D."/>
        </authorList>
    </citation>
    <scope>GENOME REANNOTATION</scope>
    <source>
        <strain>cv. Columbia</strain>
    </source>
</reference>
<reference key="3">
    <citation type="journal article" date="2002" name="In Silico Biol.">
        <title>Peptomics, identification of novel cationic Arabidopsis peptides with conserved sequence motifs.</title>
        <authorList>
            <person name="Olsen A.N."/>
            <person name="Mundy J."/>
            <person name="Skriver K."/>
        </authorList>
    </citation>
    <scope>GENE FAMILY</scope>
    <scope>NOMENCLATURE</scope>
</reference>
<gene>
    <name type="primary">RALFL2</name>
    <name type="ordered locus">At1g23145</name>
    <name type="ORF">T26J12</name>
</gene>
<dbReference type="EMBL" id="AC002311">
    <property type="status" value="NOT_ANNOTATED_CDS"/>
    <property type="molecule type" value="Genomic_DNA"/>
</dbReference>
<dbReference type="EMBL" id="CP002684">
    <property type="protein sequence ID" value="AEE30345.1"/>
    <property type="molecule type" value="Genomic_DNA"/>
</dbReference>
<dbReference type="RefSeq" id="NP_001077585.1">
    <property type="nucleotide sequence ID" value="NM_001084116.2"/>
</dbReference>
<dbReference type="SMR" id="A8MQ92"/>
<dbReference type="PaxDb" id="3702-AT1G23145.1"/>
<dbReference type="ProteomicsDB" id="228172"/>
<dbReference type="EnsemblPlants" id="AT1G23145.1">
    <property type="protein sequence ID" value="AT1G23145.1"/>
    <property type="gene ID" value="AT1G23145"/>
</dbReference>
<dbReference type="GeneID" id="5007717"/>
<dbReference type="Gramene" id="AT1G23145.1">
    <property type="protein sequence ID" value="AT1G23145.1"/>
    <property type="gene ID" value="AT1G23145"/>
</dbReference>
<dbReference type="KEGG" id="ath:AT1G23145"/>
<dbReference type="Araport" id="AT1G23145"/>
<dbReference type="TAIR" id="AT1G23145">
    <property type="gene designation" value="RALFL2"/>
</dbReference>
<dbReference type="HOGENOM" id="CLU_2349616_0_0_1"/>
<dbReference type="InParanoid" id="A8MQ92"/>
<dbReference type="OrthoDB" id="1104153at2759"/>
<dbReference type="PhylomeDB" id="A8MQ92"/>
<dbReference type="PRO" id="PR:A8MQ92"/>
<dbReference type="Proteomes" id="UP000006548">
    <property type="component" value="Chromosome 1"/>
</dbReference>
<dbReference type="ExpressionAtlas" id="A8MQ92">
    <property type="expression patterns" value="baseline"/>
</dbReference>
<dbReference type="GO" id="GO:0048046">
    <property type="term" value="C:apoplast"/>
    <property type="evidence" value="ECO:0000250"/>
    <property type="project" value="TAIR"/>
</dbReference>
<dbReference type="GO" id="GO:0005179">
    <property type="term" value="F:hormone activity"/>
    <property type="evidence" value="ECO:0000250"/>
    <property type="project" value="UniProtKB"/>
</dbReference>
<dbReference type="GO" id="GO:0019722">
    <property type="term" value="P:calcium-mediated signaling"/>
    <property type="evidence" value="ECO:0000250"/>
    <property type="project" value="UniProtKB"/>
</dbReference>
<dbReference type="GO" id="GO:0007267">
    <property type="term" value="P:cell-cell signaling"/>
    <property type="evidence" value="ECO:0000250"/>
    <property type="project" value="TAIR"/>
</dbReference>
<dbReference type="GO" id="GO:0040008">
    <property type="term" value="P:regulation of growth"/>
    <property type="evidence" value="ECO:0007669"/>
    <property type="project" value="UniProtKB-ARBA"/>
</dbReference>
<dbReference type="InterPro" id="IPR008801">
    <property type="entry name" value="RALF"/>
</dbReference>
<dbReference type="PANTHER" id="PTHR34270">
    <property type="entry name" value="PROTEIN RALF-LIKE 15-RELATED"/>
    <property type="match status" value="1"/>
</dbReference>
<dbReference type="PANTHER" id="PTHR34270:SF3">
    <property type="entry name" value="PROTEIN RALF-LIKE 16-RELATED"/>
    <property type="match status" value="1"/>
</dbReference>
<dbReference type="Pfam" id="PF05498">
    <property type="entry name" value="RALF"/>
    <property type="match status" value="1"/>
</dbReference>
<name>RLF2_ARATH</name>
<proteinExistence type="inferred from homology"/>
<feature type="signal peptide" evidence="2">
    <location>
        <begin position="1"/>
        <end position="25"/>
    </location>
</feature>
<feature type="chain" id="PRO_0000420292" description="Protein RALF-like 2">
    <location>
        <begin position="26"/>
        <end position="97"/>
    </location>
</feature>
<feature type="disulfide bond" evidence="1">
    <location>
        <begin position="42"/>
        <end position="49"/>
    </location>
</feature>
<feature type="disulfide bond" evidence="1">
    <location>
        <begin position="61"/>
        <end position="67"/>
    </location>
</feature>
<protein>
    <recommendedName>
        <fullName>Protein RALF-like 2</fullName>
    </recommendedName>
</protein>
<organism>
    <name type="scientific">Arabidopsis thaliana</name>
    <name type="common">Mouse-ear cress</name>
    <dbReference type="NCBI Taxonomy" id="3702"/>
    <lineage>
        <taxon>Eukaryota</taxon>
        <taxon>Viridiplantae</taxon>
        <taxon>Streptophyta</taxon>
        <taxon>Embryophyta</taxon>
        <taxon>Tracheophyta</taxon>
        <taxon>Spermatophyta</taxon>
        <taxon>Magnoliopsida</taxon>
        <taxon>eudicotyledons</taxon>
        <taxon>Gunneridae</taxon>
        <taxon>Pentapetalae</taxon>
        <taxon>rosids</taxon>
        <taxon>malvids</taxon>
        <taxon>Brassicales</taxon>
        <taxon>Brassicaceae</taxon>
        <taxon>Camelineae</taxon>
        <taxon>Arabidopsis</taxon>
    </lineage>
</organism>